<keyword id="KW-0067">ATP-binding</keyword>
<keyword id="KW-0143">Chaperone</keyword>
<keyword id="KW-0547">Nucleotide-binding</keyword>
<keyword id="KW-1185">Reference proteome</keyword>
<keyword id="KW-0346">Stress response</keyword>
<organism>
    <name type="scientific">Macaca fascicularis</name>
    <name type="common">Crab-eating macaque</name>
    <name type="synonym">Cynomolgus monkey</name>
    <dbReference type="NCBI Taxonomy" id="9541"/>
    <lineage>
        <taxon>Eukaryota</taxon>
        <taxon>Metazoa</taxon>
        <taxon>Chordata</taxon>
        <taxon>Craniata</taxon>
        <taxon>Vertebrata</taxon>
        <taxon>Euteleostomi</taxon>
        <taxon>Mammalia</taxon>
        <taxon>Eutheria</taxon>
        <taxon>Euarchontoglires</taxon>
        <taxon>Primates</taxon>
        <taxon>Haplorrhini</taxon>
        <taxon>Catarrhini</taxon>
        <taxon>Cercopithecidae</taxon>
        <taxon>Cercopithecinae</taxon>
        <taxon>Macaca</taxon>
    </lineage>
</organism>
<reference key="1">
    <citation type="submission" date="2005-06" db="EMBL/GenBank/DDBJ databases">
        <title>DNA sequences of macaque genes expressed in brain or testis and its evolutionary implications.</title>
        <authorList>
            <consortium name="International consortium for macaque cDNA sequencing and analysis"/>
        </authorList>
    </citation>
    <scope>NUCLEOTIDE SEQUENCE [LARGE SCALE MRNA]</scope>
    <source>
        <tissue>Testis</tissue>
    </source>
</reference>
<dbReference type="EMBL" id="AB168570">
    <property type="protein sequence ID" value="BAE00684.1"/>
    <property type="molecule type" value="mRNA"/>
</dbReference>
<dbReference type="EMBL" id="AB168812">
    <property type="protein sequence ID" value="BAE00917.1"/>
    <property type="molecule type" value="mRNA"/>
</dbReference>
<dbReference type="RefSeq" id="NP_001306376.1">
    <property type="nucleotide sequence ID" value="NM_001319447.1"/>
</dbReference>
<dbReference type="RefSeq" id="XP_015305093.1">
    <property type="nucleotide sequence ID" value="XM_015449607.1"/>
</dbReference>
<dbReference type="RefSeq" id="XP_045246101.1">
    <property type="nucleotide sequence ID" value="XM_045390166.2"/>
</dbReference>
<dbReference type="RefSeq" id="XP_045246102.1">
    <property type="nucleotide sequence ID" value="XM_045390167.2"/>
</dbReference>
<dbReference type="RefSeq" id="XP_065399061.1">
    <property type="nucleotide sequence ID" value="XM_065542989.1"/>
</dbReference>
<dbReference type="SMR" id="Q4R888"/>
<dbReference type="STRING" id="9541.ENSMFAP00000045458"/>
<dbReference type="Ensembl" id="ENSMFAT00000019762.2">
    <property type="protein sequence ID" value="ENSMFAP00000045458.2"/>
    <property type="gene ID" value="ENSMFAG00000000455.2"/>
</dbReference>
<dbReference type="GeneID" id="101926012"/>
<dbReference type="eggNOG" id="KOG0101">
    <property type="taxonomic scope" value="Eukaryota"/>
</dbReference>
<dbReference type="GeneTree" id="ENSGT00940000162096"/>
<dbReference type="Proteomes" id="UP000233100">
    <property type="component" value="Chromosome 4"/>
</dbReference>
<dbReference type="Bgee" id="ENSMFAG00000000455">
    <property type="expression patterns" value="Expressed in skeletal muscle tissue and 13 other cell types or tissues"/>
</dbReference>
<dbReference type="GO" id="GO:0044297">
    <property type="term" value="C:cell body"/>
    <property type="evidence" value="ECO:0007669"/>
    <property type="project" value="Ensembl"/>
</dbReference>
<dbReference type="GO" id="GO:0008180">
    <property type="term" value="C:COP9 signalosome"/>
    <property type="evidence" value="ECO:0007669"/>
    <property type="project" value="Ensembl"/>
</dbReference>
<dbReference type="GO" id="GO:0005829">
    <property type="term" value="C:cytosol"/>
    <property type="evidence" value="ECO:0007669"/>
    <property type="project" value="Ensembl"/>
</dbReference>
<dbReference type="GO" id="GO:0002199">
    <property type="term" value="C:zona pellucida receptor complex"/>
    <property type="evidence" value="ECO:0007669"/>
    <property type="project" value="Ensembl"/>
</dbReference>
<dbReference type="GO" id="GO:0005524">
    <property type="term" value="F:ATP binding"/>
    <property type="evidence" value="ECO:0007669"/>
    <property type="project" value="UniProtKB-KW"/>
</dbReference>
<dbReference type="GO" id="GO:0140662">
    <property type="term" value="F:ATP-dependent protein folding chaperone"/>
    <property type="evidence" value="ECO:0007669"/>
    <property type="project" value="InterPro"/>
</dbReference>
<dbReference type="GO" id="GO:0031072">
    <property type="term" value="F:heat shock protein binding"/>
    <property type="evidence" value="ECO:0007669"/>
    <property type="project" value="Ensembl"/>
</dbReference>
<dbReference type="GO" id="GO:0031625">
    <property type="term" value="F:ubiquitin protein ligase binding"/>
    <property type="evidence" value="ECO:0007669"/>
    <property type="project" value="Ensembl"/>
</dbReference>
<dbReference type="GO" id="GO:0051082">
    <property type="term" value="F:unfolded protein binding"/>
    <property type="evidence" value="ECO:0007669"/>
    <property type="project" value="Ensembl"/>
</dbReference>
<dbReference type="GO" id="GO:0007339">
    <property type="term" value="P:binding of sperm to zona pellucida"/>
    <property type="evidence" value="ECO:0007669"/>
    <property type="project" value="Ensembl"/>
</dbReference>
<dbReference type="GO" id="GO:1903955">
    <property type="term" value="P:positive regulation of protein targeting to mitochondrion"/>
    <property type="evidence" value="ECO:0007669"/>
    <property type="project" value="Ensembl"/>
</dbReference>
<dbReference type="GO" id="GO:0042026">
    <property type="term" value="P:protein refolding"/>
    <property type="evidence" value="ECO:0007669"/>
    <property type="project" value="Ensembl"/>
</dbReference>
<dbReference type="CDD" id="cd10233">
    <property type="entry name" value="ASKHA_NBD_HSP70_HSPA1"/>
    <property type="match status" value="1"/>
</dbReference>
<dbReference type="FunFam" id="2.60.34.10:FF:000002">
    <property type="entry name" value="Heat shock 70 kDa"/>
    <property type="match status" value="1"/>
</dbReference>
<dbReference type="FunFam" id="3.30.420.40:FF:000172">
    <property type="entry name" value="Heat shock 70 kDa protein"/>
    <property type="match status" value="1"/>
</dbReference>
<dbReference type="FunFam" id="1.20.1270.10:FF:000019">
    <property type="entry name" value="Heat shock 70 kDa protein 1-like"/>
    <property type="match status" value="1"/>
</dbReference>
<dbReference type="FunFam" id="3.30.30.30:FF:000001">
    <property type="entry name" value="heat shock 70 kDa protein-like"/>
    <property type="match status" value="1"/>
</dbReference>
<dbReference type="FunFam" id="3.30.420.40:FF:000028">
    <property type="entry name" value="heat shock 70 kDa protein-like"/>
    <property type="match status" value="1"/>
</dbReference>
<dbReference type="FunFam" id="3.30.420.40:FF:000135">
    <property type="entry name" value="Heat shock cognate 71 kDa protein"/>
    <property type="match status" value="1"/>
</dbReference>
<dbReference type="FunFam" id="3.90.640.10:FF:000134">
    <property type="entry name" value="Heat shock cognate 71 kDa protein"/>
    <property type="match status" value="1"/>
</dbReference>
<dbReference type="FunFam" id="3.30.420.40:FF:000026">
    <property type="entry name" value="Heat shock protein 70"/>
    <property type="match status" value="1"/>
</dbReference>
<dbReference type="Gene3D" id="1.20.1270.10">
    <property type="match status" value="1"/>
</dbReference>
<dbReference type="Gene3D" id="3.30.30.30">
    <property type="match status" value="1"/>
</dbReference>
<dbReference type="Gene3D" id="3.30.420.40">
    <property type="match status" value="2"/>
</dbReference>
<dbReference type="Gene3D" id="3.90.640.10">
    <property type="entry name" value="Actin, Chain A, domain 4"/>
    <property type="match status" value="1"/>
</dbReference>
<dbReference type="Gene3D" id="2.60.34.10">
    <property type="entry name" value="Substrate Binding Domain Of DNAk, Chain A, domain 1"/>
    <property type="match status" value="1"/>
</dbReference>
<dbReference type="InterPro" id="IPR043129">
    <property type="entry name" value="ATPase_NBD"/>
</dbReference>
<dbReference type="InterPro" id="IPR018181">
    <property type="entry name" value="Heat_shock_70_CS"/>
</dbReference>
<dbReference type="InterPro" id="IPR029048">
    <property type="entry name" value="HSP70_C_sf"/>
</dbReference>
<dbReference type="InterPro" id="IPR029047">
    <property type="entry name" value="HSP70_peptide-bd_sf"/>
</dbReference>
<dbReference type="InterPro" id="IPR013126">
    <property type="entry name" value="Hsp_70_fam"/>
</dbReference>
<dbReference type="NCBIfam" id="NF001413">
    <property type="entry name" value="PRK00290.1"/>
    <property type="match status" value="1"/>
</dbReference>
<dbReference type="PANTHER" id="PTHR19375">
    <property type="entry name" value="HEAT SHOCK PROTEIN 70KDA"/>
    <property type="match status" value="1"/>
</dbReference>
<dbReference type="Pfam" id="PF00012">
    <property type="entry name" value="HSP70"/>
    <property type="match status" value="1"/>
</dbReference>
<dbReference type="PRINTS" id="PR00301">
    <property type="entry name" value="HEATSHOCK70"/>
</dbReference>
<dbReference type="SUPFAM" id="SSF53067">
    <property type="entry name" value="Actin-like ATPase domain"/>
    <property type="match status" value="2"/>
</dbReference>
<dbReference type="SUPFAM" id="SSF100934">
    <property type="entry name" value="Heat shock protein 70kD (HSP70), C-terminal subdomain"/>
    <property type="match status" value="1"/>
</dbReference>
<dbReference type="SUPFAM" id="SSF100920">
    <property type="entry name" value="Heat shock protein 70kD (HSP70), peptide-binding domain"/>
    <property type="match status" value="1"/>
</dbReference>
<dbReference type="PROSITE" id="PS00297">
    <property type="entry name" value="HSP70_1"/>
    <property type="match status" value="1"/>
</dbReference>
<dbReference type="PROSITE" id="PS00329">
    <property type="entry name" value="HSP70_2"/>
    <property type="match status" value="1"/>
</dbReference>
<dbReference type="PROSITE" id="PS01036">
    <property type="entry name" value="HSP70_3"/>
    <property type="match status" value="1"/>
</dbReference>
<feature type="chain" id="PRO_0000383116" description="Heat shock 70 kDa protein 1-like">
    <location>
        <begin position="1"/>
        <end position="641"/>
    </location>
</feature>
<feature type="region of interest" description="Nucleotide-binding domain (NBD)" evidence="2">
    <location>
        <begin position="3"/>
        <end position="388"/>
    </location>
</feature>
<feature type="region of interest" description="Substrate-binding domain (SBD)" evidence="2">
    <location>
        <begin position="396"/>
        <end position="511"/>
    </location>
</feature>
<feature type="binding site" evidence="1">
    <location>
        <begin position="14"/>
        <end position="17"/>
    </location>
    <ligand>
        <name>ATP</name>
        <dbReference type="ChEBI" id="CHEBI:30616"/>
    </ligand>
</feature>
<feature type="binding site" evidence="1">
    <location>
        <position position="73"/>
    </location>
    <ligand>
        <name>ATP</name>
        <dbReference type="ChEBI" id="CHEBI:30616"/>
    </ligand>
</feature>
<feature type="binding site" evidence="1">
    <location>
        <begin position="204"/>
        <end position="206"/>
    </location>
    <ligand>
        <name>ATP</name>
        <dbReference type="ChEBI" id="CHEBI:30616"/>
    </ligand>
</feature>
<feature type="binding site" evidence="1">
    <location>
        <begin position="270"/>
        <end position="277"/>
    </location>
    <ligand>
        <name>ATP</name>
        <dbReference type="ChEBI" id="CHEBI:30616"/>
    </ligand>
</feature>
<feature type="binding site" evidence="1">
    <location>
        <begin position="341"/>
        <end position="344"/>
    </location>
    <ligand>
        <name>ATP</name>
        <dbReference type="ChEBI" id="CHEBI:30616"/>
    </ligand>
</feature>
<feature type="sequence conflict" description="In Ref. 1; BAE00917." evidence="4" ref="1">
    <original>S</original>
    <variation>P</variation>
    <location>
        <position position="546"/>
    </location>
</feature>
<gene>
    <name type="primary">HSPA1L</name>
    <name type="ORF">QtsA-13086</name>
    <name type="ORF">QtsA-15024</name>
</gene>
<name>HS71L_MACFA</name>
<comment type="function">
    <text evidence="3">Molecular chaperone implicated in a wide variety of cellular processes, including protection of the proteome from stress, folding and transport of newly synthesized polypeptides, activation of proteolysis of misfolded proteins and the formation and dissociation of protein complexes. Plays a pivotal role in the protein quality control system, ensuring the correct folding of proteins, the re-folding of misfolded proteins and controlling the targeting of proteins for subsequent degradation. This is achieved through cycles of ATP binding, ATP hydrolysis and ADP release, mediated by co-chaperones. The affinity for polypeptides is regulated by its nucleotide bound state. In the ATP-bound form, it has a low affinity for substrate proteins. However, upon hydrolysis of the ATP to ADP, it undergoes a conformational change that increases its affinity for substrate proteins. It goes through repeated cycles of ATP hydrolysis and nucleotide exchange, which permits cycles of substrate binding and release. Positive regulator of PRKN translocation to damaged mitochondria.</text>
</comment>
<comment type="subunit">
    <text evidence="3">Interacts with PRKN.</text>
</comment>
<comment type="domain">
    <text evidence="3">The N-terminal nucleotide binding domain (NBD) (also known as the ATPase domain) is responsible for binding and hydrolyzing ATP. The C-terminal substrate-binding domain (SBD) (also known as peptide-binding domain) binds to the client/substrate proteins. The two domains are allosterically coupled so that, when ATP is bound to the NBD, the SBD binds relatively weakly to clients. When ADP is bound in the NBD, a conformational change enhances the affinity of the SBD for client proteins.</text>
</comment>
<comment type="similarity">
    <text evidence="4">Belongs to the heat shock protein 70 family.</text>
</comment>
<accession>Q4R888</accession>
<accession>Q4R7K5</accession>
<protein>
    <recommendedName>
        <fullName>Heat shock 70 kDa protein 1-like</fullName>
        <shortName>Heat shock 70 kDa protein 1L</shortName>
    </recommendedName>
</protein>
<evidence type="ECO:0000250" key="1"/>
<evidence type="ECO:0000250" key="2">
    <source>
        <dbReference type="UniProtKB" id="P11142"/>
    </source>
</evidence>
<evidence type="ECO:0000250" key="3">
    <source>
        <dbReference type="UniProtKB" id="P34931"/>
    </source>
</evidence>
<evidence type="ECO:0000305" key="4"/>
<proteinExistence type="evidence at transcript level"/>
<sequence>MAAAKGIAIGIDLGTTYSCVGVFQHGKVEIIANDQGNRTTPSYVAFTDTERLIGDAAKNQVAMNPQNTVFDAKRLIGRKFNDPVVQSDMKLWPFQVINEGGKPKVLVSYKGENKAFYPEEISSMVLTKMKETAEAFLGHPVTNAVITVPAYFNDSQRQATKDAGVIAGLNVLRIINEPTAAAIAYGLDKGGRGERHVLIFDLGGGTFDVSILTIDDGIFEVKATAGDTHLGGEDFDNRLVSHFVEEFKRKHKKDISQNKRAVRRLRTACERAKRTLSSSTQANLEIDSLYEGIDFYTSITRARFEELCADLFRGTLEPVEKALRDAKMDKAKIHDIVLVGGSTRIPKVQRLLQDYFNGRDLNKSINPDEAVAYGAAVQAAILMGDKSEKVQDLLLLDVAPLSLGLETAGGVMTALIKRNSTIPTKQTQIFTTYSDNQPGVLIQVYEGERAMTKDNNLLGRFDLTGIPPAPRGVPQIEVTFDIDANGILNVTAMDKSTGKANKITITNDKGRLSKEEIERMVLDAEKYKAEDEVQREKIAAKNALESYAFNMKSVVSDEGLKGKISESDKKKILDKCNELLSWLEANQLAEKDEFDHKRKELEQMCNPIITKLYQGGCTGPACGTGYAPGRPATGPTIEEVD</sequence>